<organism>
    <name type="scientific">Varicella-zoster virus (strain Dumas)</name>
    <name type="common">HHV-3</name>
    <name type="synonym">Human herpesvirus 3</name>
    <dbReference type="NCBI Taxonomy" id="10338"/>
    <lineage>
        <taxon>Viruses</taxon>
        <taxon>Duplodnaviria</taxon>
        <taxon>Heunggongvirae</taxon>
        <taxon>Peploviricota</taxon>
        <taxon>Herviviricetes</taxon>
        <taxon>Herpesvirales</taxon>
        <taxon>Orthoherpesviridae</taxon>
        <taxon>Alphaherpesvirinae</taxon>
        <taxon>Varicellovirus</taxon>
        <taxon>Varicellovirus humanalpha3</taxon>
        <taxon>Human herpesvirus 3</taxon>
    </lineage>
</organism>
<reference key="1">
    <citation type="journal article" date="1983" name="EMBO J.">
        <title>DNA sequence of the US component of the varicella-zoster virus genome.</title>
        <authorList>
            <person name="Davison A.J."/>
        </authorList>
    </citation>
    <scope>NUCLEOTIDE SEQUENCE [GENOMIC DNA]</scope>
</reference>
<reference key="2">
    <citation type="journal article" date="1986" name="J. Gen. Virol.">
        <title>The complete DNA sequence of varicella-zoster virus.</title>
        <authorList>
            <person name="Davison A.J."/>
            <person name="Scott J.E."/>
        </authorList>
    </citation>
    <scope>NUCLEOTIDE SEQUENCE [LARGE SCALE GENOMIC DNA]</scope>
</reference>
<reference key="3">
    <citation type="journal article" date="2001" name="Virology">
        <title>Varicella-zoster virus (VZV) ORF65 virion protein is dispensable for replication in cell culture and is phosphorylated by casein kinase II, but not by the VZV protein kinases.</title>
        <authorList>
            <person name="Cohen J.I."/>
            <person name="Sato H."/>
            <person name="Srinivas S."/>
            <person name="Lekstrom K."/>
        </authorList>
    </citation>
    <scope>SUBCELLULAR LOCATION</scope>
    <scope>PHOSPHORYLATION</scope>
</reference>
<reference key="4">
    <citation type="journal article" date="2009" name="J. Virol.">
        <title>Comparison of the pseudorabies virus Us9 protein with homologs from other veterinary and human alphaherpesviruses.</title>
        <authorList>
            <person name="Lyman M.G."/>
            <person name="Kemp C.D."/>
            <person name="Taylor M.P."/>
            <person name="Enquist L.W."/>
        </authorList>
    </citation>
    <scope>TOPOLOGY</scope>
    <scope>SUBCELLULAR LOCATION</scope>
</reference>
<keyword id="KW-1032">Host cell membrane</keyword>
<keyword id="KW-1040">Host Golgi apparatus</keyword>
<keyword id="KW-1043">Host membrane</keyword>
<keyword id="KW-0472">Membrane</keyword>
<keyword id="KW-0597">Phosphoprotein</keyword>
<keyword id="KW-1185">Reference proteome</keyword>
<keyword id="KW-0735">Signal-anchor</keyword>
<keyword id="KW-0812">Transmembrane</keyword>
<keyword id="KW-1133">Transmembrane helix</keyword>
<keyword id="KW-0261">Viral envelope protein</keyword>
<keyword id="KW-0946">Virion</keyword>
<organismHost>
    <name type="scientific">Homo sapiens</name>
    <name type="common">Human</name>
    <dbReference type="NCBI Taxonomy" id="9606"/>
</organismHost>
<comment type="function">
    <text>Essential for the anterograde spread of the infection throughout the host nervous system. Together with the gE/gI heterodimer, US9 is involved in the sorting and transport of viral structural components toward axon tips.</text>
</comment>
<comment type="subcellular location">
    <subcellularLocation>
        <location evidence="3">Virion membrane</location>
        <topology evidence="4">Single-pass type II membrane protein</topology>
    </subcellularLocation>
    <subcellularLocation>
        <location evidence="3">Host Golgi apparatus membrane</location>
        <topology evidence="4">Single-pass type II membrane protein</topology>
    </subcellularLocation>
    <subcellularLocation>
        <location evidence="4">Host Golgi apparatus</location>
        <location evidence="4">Host trans-Golgi network</location>
    </subcellularLocation>
    <subcellularLocation>
        <location evidence="3">Host cell membrane</location>
        <topology evidence="4">Single-pass type II membrane protein</topology>
    </subcellularLocation>
    <text evidence="5">During virion morphogenesis, this protein accumulates in the trans-Golgi where secondary envelopment occurs.</text>
</comment>
<comment type="PTM">
    <text evidence="5">Phosphorylated on serines within the acidic cluster, possibly by host CK2. Phosphorylation determines whether endocytosed viral US9 traffics to the trans-Golgi network or recycles to the cell membrane.</text>
</comment>
<comment type="similarity">
    <text evidence="5">Belongs to the alphaherpesvirinae envelope protein US9 family.</text>
</comment>
<sequence length="102" mass="11436">MAGQNTMEGEAVALLMEAVVTPRAQPNNTTITAIQPSRSAEKCYYSDSENETADEFLRRIGKYQHKIYHRKKFCYITLIIVFVFAMTGAAFALGYITSQFVG</sequence>
<accession>P09312</accession>
<feature type="chain" id="PRO_0000116142" description="Envelope protein US9">
    <location>
        <begin position="1"/>
        <end position="102"/>
    </location>
</feature>
<feature type="topological domain" description="Intravirion" evidence="1">
    <location>
        <begin position="1"/>
        <end position="75"/>
    </location>
</feature>
<feature type="transmembrane region" description="Helical; Signal-anchor for type II membrane protein" evidence="1">
    <location>
        <begin position="76"/>
        <end position="96"/>
    </location>
</feature>
<feature type="topological domain" description="Virion surface" evidence="1">
    <location>
        <begin position="97"/>
        <end position="102"/>
    </location>
</feature>
<feature type="region of interest" description="Acidic">
    <location>
        <begin position="41"/>
        <end position="55"/>
    </location>
</feature>
<feature type="short sequence motif" description="Di-leucine internalization motif" evidence="2">
    <location>
        <begin position="14"/>
        <end position="15"/>
    </location>
</feature>
<feature type="modified residue" description="Phosphoserine; by host CK2" evidence="2">
    <location>
        <position position="46"/>
    </location>
</feature>
<feature type="modified residue" description="Phosphoserine; by host CK2" evidence="2">
    <location>
        <position position="48"/>
    </location>
</feature>
<gene>
    <name type="ORF">ORF65</name>
</gene>
<dbReference type="EMBL" id="X04370">
    <property type="protein sequence ID" value="CAA27948.1"/>
    <property type="molecule type" value="Genomic_DNA"/>
</dbReference>
<dbReference type="EMBL" id="X00208">
    <property type="protein sequence ID" value="CAA25030.1"/>
    <property type="molecule type" value="Genomic_DNA"/>
</dbReference>
<dbReference type="PIR" id="D27345">
    <property type="entry name" value="WZBE65"/>
</dbReference>
<dbReference type="RefSeq" id="NP_040187.1">
    <property type="nucleotide sequence ID" value="NC_001348.1"/>
</dbReference>
<dbReference type="GeneID" id="1487702"/>
<dbReference type="KEGG" id="vg:1487702"/>
<dbReference type="Proteomes" id="UP000002602">
    <property type="component" value="Genome"/>
</dbReference>
<dbReference type="GO" id="GO:0043657">
    <property type="term" value="C:host cell"/>
    <property type="evidence" value="ECO:0007669"/>
    <property type="project" value="GOC"/>
</dbReference>
<dbReference type="GO" id="GO:0044178">
    <property type="term" value="C:host cell Golgi membrane"/>
    <property type="evidence" value="ECO:0007669"/>
    <property type="project" value="UniProtKB-SubCell"/>
</dbReference>
<dbReference type="GO" id="GO:0020002">
    <property type="term" value="C:host cell plasma membrane"/>
    <property type="evidence" value="ECO:0007669"/>
    <property type="project" value="UniProtKB-SubCell"/>
</dbReference>
<dbReference type="GO" id="GO:0016020">
    <property type="term" value="C:membrane"/>
    <property type="evidence" value="ECO:0007669"/>
    <property type="project" value="UniProtKB-KW"/>
</dbReference>
<dbReference type="GO" id="GO:0019031">
    <property type="term" value="C:viral envelope"/>
    <property type="evidence" value="ECO:0007669"/>
    <property type="project" value="UniProtKB-KW"/>
</dbReference>
<dbReference type="GO" id="GO:0055036">
    <property type="term" value="C:virion membrane"/>
    <property type="evidence" value="ECO:0007669"/>
    <property type="project" value="UniProtKB-SubCell"/>
</dbReference>
<dbReference type="GO" id="GO:0075733">
    <property type="term" value="P:intracellular transport of virus"/>
    <property type="evidence" value="ECO:0007669"/>
    <property type="project" value="InterPro"/>
</dbReference>
<dbReference type="InterPro" id="IPR009278">
    <property type="entry name" value="Herpes_US9"/>
</dbReference>
<dbReference type="Pfam" id="PF06072">
    <property type="entry name" value="Herpes_US9"/>
    <property type="match status" value="1"/>
</dbReference>
<name>US9_VZVD</name>
<evidence type="ECO:0000250" key="1"/>
<evidence type="ECO:0000255" key="2"/>
<evidence type="ECO:0000269" key="3">
    <source>
    </source>
</evidence>
<evidence type="ECO:0000269" key="4">
    <source>
    </source>
</evidence>
<evidence type="ECO:0000305" key="5"/>
<proteinExistence type="evidence at protein level"/>
<protein>
    <recommendedName>
        <fullName>Envelope protein US9</fullName>
    </recommendedName>
    <alternativeName>
        <fullName>Envelope protein 65</fullName>
    </alternativeName>
    <alternativeName>
        <fullName>ORF65 protein</fullName>
    </alternativeName>
</protein>